<comment type="similarity">
    <text evidence="1">Belongs to the UPF0125 (RnfH) family.</text>
</comment>
<accession>A6VPR2</accession>
<organism>
    <name type="scientific">Actinobacillus succinogenes (strain ATCC 55618 / DSM 22257 / CCUG 43843 / 130Z)</name>
    <dbReference type="NCBI Taxonomy" id="339671"/>
    <lineage>
        <taxon>Bacteria</taxon>
        <taxon>Pseudomonadati</taxon>
        <taxon>Pseudomonadota</taxon>
        <taxon>Gammaproteobacteria</taxon>
        <taxon>Pasteurellales</taxon>
        <taxon>Pasteurellaceae</taxon>
        <taxon>Actinobacillus</taxon>
    </lineage>
</organism>
<dbReference type="EMBL" id="CP000746">
    <property type="protein sequence ID" value="ABR74959.1"/>
    <property type="molecule type" value="Genomic_DNA"/>
</dbReference>
<dbReference type="RefSeq" id="WP_012073336.1">
    <property type="nucleotide sequence ID" value="NC_009655.1"/>
</dbReference>
<dbReference type="SMR" id="A6VPR2"/>
<dbReference type="STRING" id="339671.Asuc_1605"/>
<dbReference type="KEGG" id="asu:Asuc_1605"/>
<dbReference type="eggNOG" id="COG2914">
    <property type="taxonomic scope" value="Bacteria"/>
</dbReference>
<dbReference type="HOGENOM" id="CLU_150721_1_0_6"/>
<dbReference type="OrthoDB" id="9796575at2"/>
<dbReference type="Proteomes" id="UP000001114">
    <property type="component" value="Chromosome"/>
</dbReference>
<dbReference type="Gene3D" id="3.10.20.280">
    <property type="entry name" value="RnfH-like"/>
    <property type="match status" value="1"/>
</dbReference>
<dbReference type="HAMAP" id="MF_00460">
    <property type="entry name" value="UPF0125_RnfH"/>
    <property type="match status" value="1"/>
</dbReference>
<dbReference type="InterPro" id="IPR016155">
    <property type="entry name" value="Mopterin_synth/thiamin_S_b"/>
</dbReference>
<dbReference type="InterPro" id="IPR005346">
    <property type="entry name" value="RnfH"/>
</dbReference>
<dbReference type="InterPro" id="IPR037021">
    <property type="entry name" value="RnfH_sf"/>
</dbReference>
<dbReference type="NCBIfam" id="NF002490">
    <property type="entry name" value="PRK01777.1"/>
    <property type="match status" value="1"/>
</dbReference>
<dbReference type="PANTHER" id="PTHR37483">
    <property type="entry name" value="UPF0125 PROTEIN RATB"/>
    <property type="match status" value="1"/>
</dbReference>
<dbReference type="PANTHER" id="PTHR37483:SF1">
    <property type="entry name" value="UPF0125 PROTEIN RATB"/>
    <property type="match status" value="1"/>
</dbReference>
<dbReference type="Pfam" id="PF03658">
    <property type="entry name" value="Ub-RnfH"/>
    <property type="match status" value="1"/>
</dbReference>
<dbReference type="SUPFAM" id="SSF54285">
    <property type="entry name" value="MoaD/ThiS"/>
    <property type="match status" value="1"/>
</dbReference>
<reference key="1">
    <citation type="journal article" date="2010" name="BMC Genomics">
        <title>A genomic perspective on the potential of Actinobacillus succinogenes for industrial succinate production.</title>
        <authorList>
            <person name="McKinlay J.B."/>
            <person name="Laivenieks M."/>
            <person name="Schindler B.D."/>
            <person name="McKinlay A.A."/>
            <person name="Siddaramappa S."/>
            <person name="Challacombe J.F."/>
            <person name="Lowry S.R."/>
            <person name="Clum A."/>
            <person name="Lapidus A.L."/>
            <person name="Burkhart K.B."/>
            <person name="Harkins V."/>
            <person name="Vieille C."/>
        </authorList>
    </citation>
    <scope>NUCLEOTIDE SEQUENCE [LARGE SCALE GENOMIC DNA]</scope>
    <source>
        <strain>ATCC 55618 / DSM 22257 / CCUG 43843 / 130Z</strain>
    </source>
</reference>
<protein>
    <recommendedName>
        <fullName evidence="1">Protein RnfH</fullName>
    </recommendedName>
</protein>
<evidence type="ECO:0000255" key="1">
    <source>
        <dbReference type="HAMAP-Rule" id="MF_00460"/>
    </source>
</evidence>
<proteinExistence type="inferred from homology"/>
<sequence length="100" mass="11393">MEQINIEIAYAYPHNHYLKSFTLDAGTTVQSAILQSGILAQYTDIDLRKNKIGIFARPVKLTDVLKNGDRIEIYRPLLADPKEIRRKRAAQQAARQKGKI</sequence>
<name>RNFH_ACTSZ</name>
<feature type="chain" id="PRO_1000072384" description="Protein RnfH">
    <location>
        <begin position="1"/>
        <end position="100"/>
    </location>
</feature>
<keyword id="KW-1185">Reference proteome</keyword>
<gene>
    <name evidence="1" type="primary">rnfH</name>
    <name type="ordered locus">Asuc_1605</name>
</gene>